<name>RL11_RHOE4</name>
<protein>
    <recommendedName>
        <fullName evidence="1">Large ribosomal subunit protein uL11</fullName>
    </recommendedName>
    <alternativeName>
        <fullName evidence="2">50S ribosomal protein L11</fullName>
    </alternativeName>
</protein>
<accession>C0ZV30</accession>
<evidence type="ECO:0000255" key="1">
    <source>
        <dbReference type="HAMAP-Rule" id="MF_00736"/>
    </source>
</evidence>
<evidence type="ECO:0000305" key="2"/>
<organism>
    <name type="scientific">Rhodococcus erythropolis (strain PR4 / NBRC 100887)</name>
    <dbReference type="NCBI Taxonomy" id="234621"/>
    <lineage>
        <taxon>Bacteria</taxon>
        <taxon>Bacillati</taxon>
        <taxon>Actinomycetota</taxon>
        <taxon>Actinomycetes</taxon>
        <taxon>Mycobacteriales</taxon>
        <taxon>Nocardiaceae</taxon>
        <taxon>Rhodococcus</taxon>
        <taxon>Rhodococcus erythropolis group</taxon>
    </lineage>
</organism>
<proteinExistence type="inferred from homology"/>
<gene>
    <name evidence="1" type="primary">rplK</name>
    <name type="ordered locus">RER_17170</name>
</gene>
<reference key="1">
    <citation type="submission" date="2005-03" db="EMBL/GenBank/DDBJ databases">
        <title>Comparison of the complete genome sequences of Rhodococcus erythropolis PR4 and Rhodococcus opacus B4.</title>
        <authorList>
            <person name="Takarada H."/>
            <person name="Sekine M."/>
            <person name="Hosoyama A."/>
            <person name="Yamada R."/>
            <person name="Fujisawa T."/>
            <person name="Omata S."/>
            <person name="Shimizu A."/>
            <person name="Tsukatani N."/>
            <person name="Tanikawa S."/>
            <person name="Fujita N."/>
            <person name="Harayama S."/>
        </authorList>
    </citation>
    <scope>NUCLEOTIDE SEQUENCE [LARGE SCALE GENOMIC DNA]</scope>
    <source>
        <strain>PR4 / NBRC 100887</strain>
    </source>
</reference>
<dbReference type="EMBL" id="AP008957">
    <property type="protein sequence ID" value="BAH32425.1"/>
    <property type="molecule type" value="Genomic_DNA"/>
</dbReference>
<dbReference type="RefSeq" id="WP_003941896.1">
    <property type="nucleotide sequence ID" value="NC_012490.1"/>
</dbReference>
<dbReference type="SMR" id="C0ZV30"/>
<dbReference type="GeneID" id="93802254"/>
<dbReference type="KEGG" id="rer:RER_17170"/>
<dbReference type="eggNOG" id="COG0080">
    <property type="taxonomic scope" value="Bacteria"/>
</dbReference>
<dbReference type="HOGENOM" id="CLU_074237_2_0_11"/>
<dbReference type="Proteomes" id="UP000002204">
    <property type="component" value="Chromosome"/>
</dbReference>
<dbReference type="GO" id="GO:0022625">
    <property type="term" value="C:cytosolic large ribosomal subunit"/>
    <property type="evidence" value="ECO:0007669"/>
    <property type="project" value="TreeGrafter"/>
</dbReference>
<dbReference type="GO" id="GO:0070180">
    <property type="term" value="F:large ribosomal subunit rRNA binding"/>
    <property type="evidence" value="ECO:0007669"/>
    <property type="project" value="UniProtKB-UniRule"/>
</dbReference>
<dbReference type="GO" id="GO:0003735">
    <property type="term" value="F:structural constituent of ribosome"/>
    <property type="evidence" value="ECO:0007669"/>
    <property type="project" value="InterPro"/>
</dbReference>
<dbReference type="GO" id="GO:0006412">
    <property type="term" value="P:translation"/>
    <property type="evidence" value="ECO:0007669"/>
    <property type="project" value="UniProtKB-UniRule"/>
</dbReference>
<dbReference type="CDD" id="cd00349">
    <property type="entry name" value="Ribosomal_L11"/>
    <property type="match status" value="1"/>
</dbReference>
<dbReference type="FunFam" id="1.10.10.250:FF:000001">
    <property type="entry name" value="50S ribosomal protein L11"/>
    <property type="match status" value="1"/>
</dbReference>
<dbReference type="FunFam" id="3.30.1550.10:FF:000001">
    <property type="entry name" value="50S ribosomal protein L11"/>
    <property type="match status" value="1"/>
</dbReference>
<dbReference type="Gene3D" id="1.10.10.250">
    <property type="entry name" value="Ribosomal protein L11, C-terminal domain"/>
    <property type="match status" value="1"/>
</dbReference>
<dbReference type="Gene3D" id="3.30.1550.10">
    <property type="entry name" value="Ribosomal protein L11/L12, N-terminal domain"/>
    <property type="match status" value="1"/>
</dbReference>
<dbReference type="HAMAP" id="MF_00736">
    <property type="entry name" value="Ribosomal_uL11"/>
    <property type="match status" value="1"/>
</dbReference>
<dbReference type="InterPro" id="IPR000911">
    <property type="entry name" value="Ribosomal_uL11"/>
</dbReference>
<dbReference type="InterPro" id="IPR006519">
    <property type="entry name" value="Ribosomal_uL11_bac-typ"/>
</dbReference>
<dbReference type="InterPro" id="IPR020783">
    <property type="entry name" value="Ribosomal_uL11_C"/>
</dbReference>
<dbReference type="InterPro" id="IPR036769">
    <property type="entry name" value="Ribosomal_uL11_C_sf"/>
</dbReference>
<dbReference type="InterPro" id="IPR020785">
    <property type="entry name" value="Ribosomal_uL11_CS"/>
</dbReference>
<dbReference type="InterPro" id="IPR020784">
    <property type="entry name" value="Ribosomal_uL11_N"/>
</dbReference>
<dbReference type="InterPro" id="IPR036796">
    <property type="entry name" value="Ribosomal_uL11_N_sf"/>
</dbReference>
<dbReference type="NCBIfam" id="TIGR01632">
    <property type="entry name" value="L11_bact"/>
    <property type="match status" value="1"/>
</dbReference>
<dbReference type="PANTHER" id="PTHR11661">
    <property type="entry name" value="60S RIBOSOMAL PROTEIN L12"/>
    <property type="match status" value="1"/>
</dbReference>
<dbReference type="PANTHER" id="PTHR11661:SF1">
    <property type="entry name" value="LARGE RIBOSOMAL SUBUNIT PROTEIN UL11M"/>
    <property type="match status" value="1"/>
</dbReference>
<dbReference type="Pfam" id="PF00298">
    <property type="entry name" value="Ribosomal_L11"/>
    <property type="match status" value="1"/>
</dbReference>
<dbReference type="Pfam" id="PF03946">
    <property type="entry name" value="Ribosomal_L11_N"/>
    <property type="match status" value="1"/>
</dbReference>
<dbReference type="SMART" id="SM00649">
    <property type="entry name" value="RL11"/>
    <property type="match status" value="1"/>
</dbReference>
<dbReference type="SUPFAM" id="SSF54747">
    <property type="entry name" value="Ribosomal L11/L12e N-terminal domain"/>
    <property type="match status" value="1"/>
</dbReference>
<dbReference type="SUPFAM" id="SSF46906">
    <property type="entry name" value="Ribosomal protein L11, C-terminal domain"/>
    <property type="match status" value="1"/>
</dbReference>
<dbReference type="PROSITE" id="PS00359">
    <property type="entry name" value="RIBOSOMAL_L11"/>
    <property type="match status" value="1"/>
</dbReference>
<comment type="function">
    <text evidence="1">Forms part of the ribosomal stalk which helps the ribosome interact with GTP-bound translation factors.</text>
</comment>
<comment type="subunit">
    <text evidence="1">Part of the ribosomal stalk of the 50S ribosomal subunit. Interacts with L10 and the large rRNA to form the base of the stalk. L10 forms an elongated spine to which L12 dimers bind in a sequential fashion forming a multimeric L10(L12)X complex.</text>
</comment>
<comment type="PTM">
    <text evidence="1">One or more lysine residues are methylated.</text>
</comment>
<comment type="similarity">
    <text evidence="1">Belongs to the universal ribosomal protein uL11 family.</text>
</comment>
<keyword id="KW-0488">Methylation</keyword>
<keyword id="KW-0687">Ribonucleoprotein</keyword>
<keyword id="KW-0689">Ribosomal protein</keyword>
<keyword id="KW-0694">RNA-binding</keyword>
<keyword id="KW-0699">rRNA-binding</keyword>
<sequence>MPPKKKKLAGLIKLQIQAGQANPAPPVGPALGQHGVNIMEFCKAYNAATESQRGNVVPVEISVYEDRTFDFKLKTPPAAKLLLKAAGVAKGSGEPHKTKVASVTMDQVREIAKTKAEDLNANDIEQAAKIIAGTARSMGITVQG</sequence>
<feature type="chain" id="PRO_1000212784" description="Large ribosomal subunit protein uL11">
    <location>
        <begin position="1"/>
        <end position="144"/>
    </location>
</feature>